<feature type="transit peptide" description="Chloroplast" evidence="4">
    <location>
        <begin position="1"/>
        <end position="62"/>
    </location>
</feature>
<feature type="chain" id="PRO_0000019414" description="Ferredoxin--NADP reductase, root isozyme, chloroplastic">
    <location>
        <begin position="63"/>
        <end position="378"/>
    </location>
</feature>
<feature type="domain" description="FAD-binding FR-type" evidence="2">
    <location>
        <begin position="93"/>
        <end position="221"/>
    </location>
</feature>
<feature type="region of interest" description="Disordered" evidence="3">
    <location>
        <begin position="1"/>
        <end position="27"/>
    </location>
</feature>
<feature type="compositionally biased region" description="Low complexity" evidence="3">
    <location>
        <begin position="1"/>
        <end position="17"/>
    </location>
</feature>
<feature type="binding site" evidence="1">
    <location>
        <begin position="153"/>
        <end position="156"/>
    </location>
    <ligand>
        <name>FAD</name>
        <dbReference type="ChEBI" id="CHEBI:57692"/>
    </ligand>
</feature>
<feature type="binding site" evidence="1">
    <location>
        <position position="156"/>
    </location>
    <ligand>
        <name>NADP(+)</name>
        <dbReference type="ChEBI" id="CHEBI:58349"/>
    </ligand>
</feature>
<feature type="binding site" evidence="1">
    <location>
        <begin position="174"/>
        <end position="176"/>
    </location>
    <ligand>
        <name>FAD</name>
        <dbReference type="ChEBI" id="CHEBI:57692"/>
    </ligand>
</feature>
<feature type="binding site" evidence="1">
    <location>
        <position position="176"/>
    </location>
    <ligand>
        <name>NADP(+)</name>
        <dbReference type="ChEBI" id="CHEBI:58349"/>
    </ligand>
</feature>
<feature type="binding site" evidence="1">
    <location>
        <position position="180"/>
    </location>
    <ligand>
        <name>FAD</name>
        <dbReference type="ChEBI" id="CHEBI:57692"/>
    </ligand>
</feature>
<feature type="binding site" evidence="1">
    <location>
        <begin position="195"/>
        <end position="197"/>
    </location>
    <ligand>
        <name>FAD</name>
        <dbReference type="ChEBI" id="CHEBI:57692"/>
    </ligand>
</feature>
<feature type="binding site" evidence="1">
    <location>
        <position position="237"/>
    </location>
    <ligand>
        <name>FAD</name>
        <dbReference type="ChEBI" id="CHEBI:57692"/>
    </ligand>
</feature>
<feature type="binding site" evidence="1">
    <location>
        <position position="237"/>
    </location>
    <ligand>
        <name>NADP(+)</name>
        <dbReference type="ChEBI" id="CHEBI:58349"/>
    </ligand>
</feature>
<feature type="binding site" evidence="1">
    <location>
        <begin position="269"/>
        <end position="270"/>
    </location>
    <ligand>
        <name>NADP(+)</name>
        <dbReference type="ChEBI" id="CHEBI:58349"/>
    </ligand>
</feature>
<feature type="binding site" evidence="1">
    <location>
        <begin position="299"/>
        <end position="300"/>
    </location>
    <ligand>
        <name>NADP(+)</name>
        <dbReference type="ChEBI" id="CHEBI:58349"/>
    </ligand>
</feature>
<feature type="binding site" evidence="1">
    <location>
        <position position="309"/>
    </location>
    <ligand>
        <name>NADP(+)</name>
        <dbReference type="ChEBI" id="CHEBI:58349"/>
    </ligand>
</feature>
<feature type="binding site" evidence="1">
    <location>
        <begin position="337"/>
        <end position="338"/>
    </location>
    <ligand>
        <name>NADP(+)</name>
        <dbReference type="ChEBI" id="CHEBI:58349"/>
    </ligand>
</feature>
<feature type="binding site" evidence="1">
    <location>
        <position position="376"/>
    </location>
    <ligand>
        <name>NADP(+)</name>
        <dbReference type="ChEBI" id="CHEBI:58349"/>
    </ligand>
</feature>
<dbReference type="EC" id="1.18.1.2"/>
<dbReference type="EMBL" id="D12815">
    <property type="protein sequence ID" value="BAA02248.1"/>
    <property type="status" value="ALT_INIT"/>
    <property type="molecule type" value="mRNA"/>
</dbReference>
<dbReference type="EMBL" id="D17410">
    <property type="protein sequence ID" value="BAA04232.1"/>
    <property type="molecule type" value="mRNA"/>
</dbReference>
<dbReference type="EMBL" id="D38445">
    <property type="protein sequence ID" value="BAA07479.1"/>
    <property type="molecule type" value="Genomic_DNA"/>
</dbReference>
<dbReference type="EMBL" id="AC091123">
    <property type="protein sequence ID" value="AAK72892.1"/>
    <property type="molecule type" value="Genomic_DNA"/>
</dbReference>
<dbReference type="EMBL" id="DP000009">
    <property type="protein sequence ID" value="ABF99220.1"/>
    <property type="molecule type" value="Genomic_DNA"/>
</dbReference>
<dbReference type="EMBL" id="AP008209">
    <property type="protein sequence ID" value="BAF13390.1"/>
    <property type="molecule type" value="Genomic_DNA"/>
</dbReference>
<dbReference type="EMBL" id="AP014959">
    <property type="protein sequence ID" value="BAS86716.1"/>
    <property type="molecule type" value="Genomic_DNA"/>
</dbReference>
<dbReference type="EMBL" id="CM000140">
    <property type="protein sequence ID" value="EAZ28818.1"/>
    <property type="molecule type" value="Genomic_DNA"/>
</dbReference>
<dbReference type="EMBL" id="AK103965">
    <property type="protein sequence ID" value="BAG96344.1"/>
    <property type="molecule type" value="mRNA"/>
</dbReference>
<dbReference type="PIR" id="T03758">
    <property type="entry name" value="T03758"/>
</dbReference>
<dbReference type="RefSeq" id="XP_015629836.1">
    <property type="nucleotide sequence ID" value="XM_015774350.1"/>
</dbReference>
<dbReference type="SMR" id="P41345"/>
<dbReference type="FunCoup" id="P41345">
    <property type="interactions" value="136"/>
</dbReference>
<dbReference type="STRING" id="39947.P41345"/>
<dbReference type="PaxDb" id="39947-P41345"/>
<dbReference type="EnsemblPlants" id="Os03t0784700-01">
    <property type="protein sequence ID" value="Os03t0784700-01"/>
    <property type="gene ID" value="Os03g0784700"/>
</dbReference>
<dbReference type="EnsemblPlants" id="Os03t0784700-02">
    <property type="protein sequence ID" value="Os03t0784700-02"/>
    <property type="gene ID" value="Os03g0784700"/>
</dbReference>
<dbReference type="Gramene" id="Os03t0784700-01">
    <property type="protein sequence ID" value="Os03t0784700-01"/>
    <property type="gene ID" value="Os03g0784700"/>
</dbReference>
<dbReference type="Gramene" id="Os03t0784700-02">
    <property type="protein sequence ID" value="Os03t0784700-02"/>
    <property type="gene ID" value="Os03g0784700"/>
</dbReference>
<dbReference type="KEGG" id="dosa:Os03g0784700"/>
<dbReference type="eggNOG" id="KOG1158">
    <property type="taxonomic scope" value="Eukaryota"/>
</dbReference>
<dbReference type="HOGENOM" id="CLU_053066_1_0_1"/>
<dbReference type="InParanoid" id="P41345"/>
<dbReference type="OMA" id="CHIIIEH"/>
<dbReference type="OrthoDB" id="1688044at2759"/>
<dbReference type="UniPathway" id="UPA00091"/>
<dbReference type="Proteomes" id="UP000000763">
    <property type="component" value="Chromosome 3"/>
</dbReference>
<dbReference type="Proteomes" id="UP000007752">
    <property type="component" value="Chromosome 3"/>
</dbReference>
<dbReference type="Proteomes" id="UP000059680">
    <property type="component" value="Chromosome 3"/>
</dbReference>
<dbReference type="GO" id="GO:0009507">
    <property type="term" value="C:chloroplast"/>
    <property type="evidence" value="ECO:0007669"/>
    <property type="project" value="UniProtKB-SubCell"/>
</dbReference>
<dbReference type="GO" id="GO:0031090">
    <property type="term" value="C:organelle membrane"/>
    <property type="evidence" value="ECO:0007669"/>
    <property type="project" value="UniProtKB-ARBA"/>
</dbReference>
<dbReference type="GO" id="GO:0004324">
    <property type="term" value="F:ferredoxin-NADP+ reductase activity"/>
    <property type="evidence" value="ECO:0007669"/>
    <property type="project" value="UniProtKB-EC"/>
</dbReference>
<dbReference type="GO" id="GO:0015979">
    <property type="term" value="P:photosynthesis"/>
    <property type="evidence" value="ECO:0007669"/>
    <property type="project" value="UniProtKB-UniPathway"/>
</dbReference>
<dbReference type="CDD" id="cd06208">
    <property type="entry name" value="CYPOR_like_FNR"/>
    <property type="match status" value="1"/>
</dbReference>
<dbReference type="FunFam" id="2.40.30.10:FF:000048">
    <property type="entry name" value="Ferredoxin--NADP reductase, chloroplastic"/>
    <property type="match status" value="1"/>
</dbReference>
<dbReference type="FunFam" id="3.40.50.80:FF:000008">
    <property type="entry name" value="Ferredoxin--NADP reductase, chloroplastic"/>
    <property type="match status" value="1"/>
</dbReference>
<dbReference type="Gene3D" id="3.40.50.80">
    <property type="entry name" value="Nucleotide-binding domain of ferredoxin-NADP reductase (FNR) module"/>
    <property type="match status" value="1"/>
</dbReference>
<dbReference type="Gene3D" id="2.40.30.10">
    <property type="entry name" value="Translation factors"/>
    <property type="match status" value="1"/>
</dbReference>
<dbReference type="InterPro" id="IPR017927">
    <property type="entry name" value="FAD-bd_FR_type"/>
</dbReference>
<dbReference type="InterPro" id="IPR001709">
    <property type="entry name" value="Flavoprot_Pyr_Nucl_cyt_Rdtase"/>
</dbReference>
<dbReference type="InterPro" id="IPR015701">
    <property type="entry name" value="FNR"/>
</dbReference>
<dbReference type="InterPro" id="IPR039261">
    <property type="entry name" value="FNR_nucleotide-bd"/>
</dbReference>
<dbReference type="InterPro" id="IPR035442">
    <property type="entry name" value="FNR_plant_Cyanobacteria"/>
</dbReference>
<dbReference type="InterPro" id="IPR001433">
    <property type="entry name" value="OxRdtase_FAD/NAD-bd"/>
</dbReference>
<dbReference type="InterPro" id="IPR017938">
    <property type="entry name" value="Riboflavin_synthase-like_b-brl"/>
</dbReference>
<dbReference type="PANTHER" id="PTHR43314">
    <property type="match status" value="1"/>
</dbReference>
<dbReference type="Pfam" id="PF00175">
    <property type="entry name" value="NAD_binding_1"/>
    <property type="match status" value="1"/>
</dbReference>
<dbReference type="PIRSF" id="PIRSF501178">
    <property type="entry name" value="FNR-PetH"/>
    <property type="match status" value="1"/>
</dbReference>
<dbReference type="PIRSF" id="PIRSF000361">
    <property type="entry name" value="Frd-NADP+_RD"/>
    <property type="match status" value="1"/>
</dbReference>
<dbReference type="PRINTS" id="PR00371">
    <property type="entry name" value="FPNCR"/>
</dbReference>
<dbReference type="SUPFAM" id="SSF52343">
    <property type="entry name" value="Ferredoxin reductase-like, C-terminal NADP-linked domain"/>
    <property type="match status" value="1"/>
</dbReference>
<dbReference type="SUPFAM" id="SSF63380">
    <property type="entry name" value="Riboflavin synthase domain-like"/>
    <property type="match status" value="1"/>
</dbReference>
<dbReference type="PROSITE" id="PS51384">
    <property type="entry name" value="FAD_FR"/>
    <property type="match status" value="1"/>
</dbReference>
<accession>P41345</accession>
<accession>Q10CF5</accession>
<accession>Q7G7H4</accession>
<accession>Q9SB29</accession>
<comment type="function">
    <text>May play a key role in regulating the relative amounts of cyclic and non-cyclic electron flow to meet the demands of the plant for ATP and reducing power. Is involved in nitrate assimilation.</text>
</comment>
<comment type="catalytic activity">
    <reaction>
        <text>2 reduced [2Fe-2S]-[ferredoxin] + NADP(+) + H(+) = 2 oxidized [2Fe-2S]-[ferredoxin] + NADPH</text>
        <dbReference type="Rhea" id="RHEA:20125"/>
        <dbReference type="Rhea" id="RHEA-COMP:10000"/>
        <dbReference type="Rhea" id="RHEA-COMP:10001"/>
        <dbReference type="ChEBI" id="CHEBI:15378"/>
        <dbReference type="ChEBI" id="CHEBI:33737"/>
        <dbReference type="ChEBI" id="CHEBI:33738"/>
        <dbReference type="ChEBI" id="CHEBI:57783"/>
        <dbReference type="ChEBI" id="CHEBI:58349"/>
        <dbReference type="EC" id="1.18.1.2"/>
    </reaction>
</comment>
<comment type="cofactor">
    <cofactor>
        <name>FAD</name>
        <dbReference type="ChEBI" id="CHEBI:57692"/>
    </cofactor>
</comment>
<comment type="pathway">
    <text>Energy metabolism; photosynthesis.</text>
</comment>
<comment type="subcellular location">
    <subcellularLocation>
        <location evidence="1">Plastid</location>
        <location evidence="1">Chloroplast</location>
    </subcellularLocation>
</comment>
<comment type="induction">
    <text>By nitrate.</text>
</comment>
<comment type="similarity">
    <text evidence="5">Belongs to the ferredoxin--NADP reductase type 1 family.</text>
</comment>
<comment type="sequence caution" evidence="5">
    <conflict type="erroneous initiation">
        <sequence resource="EMBL-CDS" id="BAA02248"/>
    </conflict>
</comment>
<sequence>MATAVASQVAVSAPAGSDRGLRSSGIQGSNNISFSNKSWVGTTLAWESKATRPRHANKVLCMSVQQASESKVAVKPLDLESANEPPLNTYKPKEPYTATIVSVERIVGPKAPGETCHIVIDHGGNVPYWEGQSYGIIPPGENPKKPGAPHNVRLYSIASTRYGDSFDGRTTSLCVRRAVYYDPETGKEDPSKNGVCSNFLCNSKPGDKVKVTGPSGKIMLLPEEDPNATHIMIATGTGVAPFRGYLRRMFMEDVPKYRFGGLAWLFLGVANTDSLLYDEEFTSYLKQYPDNFRYDKALSREQKNKNAGKMYVQDKIEEYSDEIFKLLDGGAHIYFCGLKGMMPGIQDTLKKVAEQRGESWEQKLSQLKKNKQWHVEVY</sequence>
<organism>
    <name type="scientific">Oryza sativa subsp. japonica</name>
    <name type="common">Rice</name>
    <dbReference type="NCBI Taxonomy" id="39947"/>
    <lineage>
        <taxon>Eukaryota</taxon>
        <taxon>Viridiplantae</taxon>
        <taxon>Streptophyta</taxon>
        <taxon>Embryophyta</taxon>
        <taxon>Tracheophyta</taxon>
        <taxon>Spermatophyta</taxon>
        <taxon>Magnoliopsida</taxon>
        <taxon>Liliopsida</taxon>
        <taxon>Poales</taxon>
        <taxon>Poaceae</taxon>
        <taxon>BOP clade</taxon>
        <taxon>Oryzoideae</taxon>
        <taxon>Oryzeae</taxon>
        <taxon>Oryzinae</taxon>
        <taxon>Oryza</taxon>
        <taxon>Oryza sativa</taxon>
    </lineage>
</organism>
<gene>
    <name type="ordered locus">Os03g0784700</name>
    <name type="ordered locus">LOC_Os03g57120</name>
    <name evidence="6" type="ORF">OsJ_12850</name>
    <name type="ORF">OSJNBb0093E13.2</name>
</gene>
<proteinExistence type="evidence at protein level"/>
<evidence type="ECO:0000250" key="1"/>
<evidence type="ECO:0000255" key="2">
    <source>
        <dbReference type="PROSITE-ProRule" id="PRU00716"/>
    </source>
</evidence>
<evidence type="ECO:0000256" key="3">
    <source>
        <dbReference type="SAM" id="MobiDB-lite"/>
    </source>
</evidence>
<evidence type="ECO:0000269" key="4">
    <source>
    </source>
</evidence>
<evidence type="ECO:0000305" key="5"/>
<evidence type="ECO:0000312" key="6">
    <source>
        <dbReference type="EMBL" id="EAZ28818.1"/>
    </source>
</evidence>
<name>FENRO_ORYSJ</name>
<reference key="1">
    <citation type="journal article" date="1994" name="Biochim. Biophys. Acta">
        <title>Nucleotide sequence of a rice root ferredoxin-NADP+ reductase cDNA and its induction by nitrate.</title>
        <authorList>
            <person name="Aoki H."/>
            <person name="Ida S."/>
        </authorList>
    </citation>
    <scope>NUCLEOTIDE SEQUENCE [MRNA]</scope>
    <scope>PROTEIN SEQUENCE OF 63-72</scope>
    <source>
        <strain>cv. Kinmaze</strain>
        <tissue>Root</tissue>
    </source>
</reference>
<reference key="2">
    <citation type="journal article" date="1995" name="Biochim. Biophys. Acta">
        <title>The genomic organization of the gene encoding a nitrate-inducible ferredoxin-NADP+ oxidoreductase from rice roots.</title>
        <authorList>
            <person name="Aoki H."/>
            <person name="Ida S."/>
            <person name="Tanaka K."/>
        </authorList>
    </citation>
    <scope>NUCLEOTIDE SEQUENCE [GENOMIC DNA]</scope>
    <source>
        <strain>cv. Nipponbare</strain>
    </source>
</reference>
<reference key="3">
    <citation type="journal article" date="2005" name="Genome Res.">
        <title>Sequence, annotation, and analysis of synteny between rice chromosome 3 and diverged grass species.</title>
        <authorList>
            <consortium name="The rice chromosome 3 sequencing consortium"/>
            <person name="Buell C.R."/>
            <person name="Yuan Q."/>
            <person name="Ouyang S."/>
            <person name="Liu J."/>
            <person name="Zhu W."/>
            <person name="Wang A."/>
            <person name="Maiti R."/>
            <person name="Haas B."/>
            <person name="Wortman J."/>
            <person name="Pertea M."/>
            <person name="Jones K.M."/>
            <person name="Kim M."/>
            <person name="Overton L."/>
            <person name="Tsitrin T."/>
            <person name="Fadrosh D."/>
            <person name="Bera J."/>
            <person name="Weaver B."/>
            <person name="Jin S."/>
            <person name="Johri S."/>
            <person name="Reardon M."/>
            <person name="Webb K."/>
            <person name="Hill J."/>
            <person name="Moffat K."/>
            <person name="Tallon L."/>
            <person name="Van Aken S."/>
            <person name="Lewis M."/>
            <person name="Utterback T."/>
            <person name="Feldblyum T."/>
            <person name="Zismann V."/>
            <person name="Iobst S."/>
            <person name="Hsiao J."/>
            <person name="de Vazeille A.R."/>
            <person name="Salzberg S.L."/>
            <person name="White O."/>
            <person name="Fraser C.M."/>
            <person name="Yu Y."/>
            <person name="Kim H."/>
            <person name="Rambo T."/>
            <person name="Currie J."/>
            <person name="Collura K."/>
            <person name="Kernodle-Thompson S."/>
            <person name="Wei F."/>
            <person name="Kudrna K."/>
            <person name="Ammiraju J.S.S."/>
            <person name="Luo M."/>
            <person name="Goicoechea J.L."/>
            <person name="Wing R.A."/>
            <person name="Henry D."/>
            <person name="Oates R."/>
            <person name="Palmer M."/>
            <person name="Pries G."/>
            <person name="Saski C."/>
            <person name="Simmons J."/>
            <person name="Soderlund C."/>
            <person name="Nelson W."/>
            <person name="de la Bastide M."/>
            <person name="Spiegel L."/>
            <person name="Nascimento L."/>
            <person name="Huang E."/>
            <person name="Preston R."/>
            <person name="Zutavern T."/>
            <person name="Palmer L."/>
            <person name="O'Shaughnessy A."/>
            <person name="Dike S."/>
            <person name="McCombie W.R."/>
            <person name="Minx P."/>
            <person name="Cordum H."/>
            <person name="Wilson R."/>
            <person name="Jin W."/>
            <person name="Lee H.R."/>
            <person name="Jiang J."/>
            <person name="Jackson S."/>
        </authorList>
    </citation>
    <scope>NUCLEOTIDE SEQUENCE [LARGE SCALE GENOMIC DNA]</scope>
    <source>
        <strain>cv. Nipponbare</strain>
    </source>
</reference>
<reference key="4">
    <citation type="journal article" date="2005" name="Nature">
        <title>The map-based sequence of the rice genome.</title>
        <authorList>
            <consortium name="International rice genome sequencing project (IRGSP)"/>
        </authorList>
    </citation>
    <scope>NUCLEOTIDE SEQUENCE [LARGE SCALE GENOMIC DNA]</scope>
    <source>
        <strain>cv. Nipponbare</strain>
    </source>
</reference>
<reference key="5">
    <citation type="journal article" date="2008" name="Nucleic Acids Res.">
        <title>The rice annotation project database (RAP-DB): 2008 update.</title>
        <authorList>
            <consortium name="The rice annotation project (RAP)"/>
        </authorList>
    </citation>
    <scope>GENOME REANNOTATION</scope>
    <source>
        <strain>cv. Nipponbare</strain>
    </source>
</reference>
<reference key="6">
    <citation type="journal article" date="2013" name="Rice">
        <title>Improvement of the Oryza sativa Nipponbare reference genome using next generation sequence and optical map data.</title>
        <authorList>
            <person name="Kawahara Y."/>
            <person name="de la Bastide M."/>
            <person name="Hamilton J.P."/>
            <person name="Kanamori H."/>
            <person name="McCombie W.R."/>
            <person name="Ouyang S."/>
            <person name="Schwartz D.C."/>
            <person name="Tanaka T."/>
            <person name="Wu J."/>
            <person name="Zhou S."/>
            <person name="Childs K.L."/>
            <person name="Davidson R.M."/>
            <person name="Lin H."/>
            <person name="Quesada-Ocampo L."/>
            <person name="Vaillancourt B."/>
            <person name="Sakai H."/>
            <person name="Lee S.S."/>
            <person name="Kim J."/>
            <person name="Numa H."/>
            <person name="Itoh T."/>
            <person name="Buell C.R."/>
            <person name="Matsumoto T."/>
        </authorList>
    </citation>
    <scope>GENOME REANNOTATION</scope>
    <source>
        <strain>cv. Nipponbare</strain>
    </source>
</reference>
<reference key="7">
    <citation type="journal article" date="2005" name="PLoS Biol.">
        <title>The genomes of Oryza sativa: a history of duplications.</title>
        <authorList>
            <person name="Yu J."/>
            <person name="Wang J."/>
            <person name="Lin W."/>
            <person name="Li S."/>
            <person name="Li H."/>
            <person name="Zhou J."/>
            <person name="Ni P."/>
            <person name="Dong W."/>
            <person name="Hu S."/>
            <person name="Zeng C."/>
            <person name="Zhang J."/>
            <person name="Zhang Y."/>
            <person name="Li R."/>
            <person name="Xu Z."/>
            <person name="Li S."/>
            <person name="Li X."/>
            <person name="Zheng H."/>
            <person name="Cong L."/>
            <person name="Lin L."/>
            <person name="Yin J."/>
            <person name="Geng J."/>
            <person name="Li G."/>
            <person name="Shi J."/>
            <person name="Liu J."/>
            <person name="Lv H."/>
            <person name="Li J."/>
            <person name="Wang J."/>
            <person name="Deng Y."/>
            <person name="Ran L."/>
            <person name="Shi X."/>
            <person name="Wang X."/>
            <person name="Wu Q."/>
            <person name="Li C."/>
            <person name="Ren X."/>
            <person name="Wang J."/>
            <person name="Wang X."/>
            <person name="Li D."/>
            <person name="Liu D."/>
            <person name="Zhang X."/>
            <person name="Ji Z."/>
            <person name="Zhao W."/>
            <person name="Sun Y."/>
            <person name="Zhang Z."/>
            <person name="Bao J."/>
            <person name="Han Y."/>
            <person name="Dong L."/>
            <person name="Ji J."/>
            <person name="Chen P."/>
            <person name="Wu S."/>
            <person name="Liu J."/>
            <person name="Xiao Y."/>
            <person name="Bu D."/>
            <person name="Tan J."/>
            <person name="Yang L."/>
            <person name="Ye C."/>
            <person name="Zhang J."/>
            <person name="Xu J."/>
            <person name="Zhou Y."/>
            <person name="Yu Y."/>
            <person name="Zhang B."/>
            <person name="Zhuang S."/>
            <person name="Wei H."/>
            <person name="Liu B."/>
            <person name="Lei M."/>
            <person name="Yu H."/>
            <person name="Li Y."/>
            <person name="Xu H."/>
            <person name="Wei S."/>
            <person name="He X."/>
            <person name="Fang L."/>
            <person name="Zhang Z."/>
            <person name="Zhang Y."/>
            <person name="Huang X."/>
            <person name="Su Z."/>
            <person name="Tong W."/>
            <person name="Li J."/>
            <person name="Tong Z."/>
            <person name="Li S."/>
            <person name="Ye J."/>
            <person name="Wang L."/>
            <person name="Fang L."/>
            <person name="Lei T."/>
            <person name="Chen C.-S."/>
            <person name="Chen H.-C."/>
            <person name="Xu Z."/>
            <person name="Li H."/>
            <person name="Huang H."/>
            <person name="Zhang F."/>
            <person name="Xu H."/>
            <person name="Li N."/>
            <person name="Zhao C."/>
            <person name="Li S."/>
            <person name="Dong L."/>
            <person name="Huang Y."/>
            <person name="Li L."/>
            <person name="Xi Y."/>
            <person name="Qi Q."/>
            <person name="Li W."/>
            <person name="Zhang B."/>
            <person name="Hu W."/>
            <person name="Zhang Y."/>
            <person name="Tian X."/>
            <person name="Jiao Y."/>
            <person name="Liang X."/>
            <person name="Jin J."/>
            <person name="Gao L."/>
            <person name="Zheng W."/>
            <person name="Hao B."/>
            <person name="Liu S.-M."/>
            <person name="Wang W."/>
            <person name="Yuan L."/>
            <person name="Cao M."/>
            <person name="McDermott J."/>
            <person name="Samudrala R."/>
            <person name="Wang J."/>
            <person name="Wong G.K.-S."/>
            <person name="Yang H."/>
        </authorList>
    </citation>
    <scope>NUCLEOTIDE SEQUENCE [LARGE SCALE GENOMIC DNA]</scope>
    <source>
        <strain>cv. Nipponbare</strain>
    </source>
</reference>
<reference key="8">
    <citation type="journal article" date="2003" name="Science">
        <title>Collection, mapping, and annotation of over 28,000 cDNA clones from japonica rice.</title>
        <authorList>
            <consortium name="The rice full-length cDNA consortium"/>
        </authorList>
    </citation>
    <scope>NUCLEOTIDE SEQUENCE [LARGE SCALE MRNA]</scope>
    <source>
        <strain>cv. Nipponbare</strain>
    </source>
</reference>
<protein>
    <recommendedName>
        <fullName>Ferredoxin--NADP reductase, root isozyme, chloroplastic</fullName>
        <shortName>FNR</shortName>
        <ecNumber>1.18.1.2</ecNumber>
    </recommendedName>
</protein>
<keyword id="KW-0150">Chloroplast</keyword>
<keyword id="KW-0903">Direct protein sequencing</keyword>
<keyword id="KW-0249">Electron transport</keyword>
<keyword id="KW-0274">FAD</keyword>
<keyword id="KW-0285">Flavoprotein</keyword>
<keyword id="KW-0521">NADP</keyword>
<keyword id="KW-0560">Oxidoreductase</keyword>
<keyword id="KW-0602">Photosynthesis</keyword>
<keyword id="KW-0934">Plastid</keyword>
<keyword id="KW-1185">Reference proteome</keyword>
<keyword id="KW-0809">Transit peptide</keyword>
<keyword id="KW-0813">Transport</keyword>